<feature type="chain" id="PRO_0000340275" description="Ubiquinol-cytochrome c reductase complex assembly factor 6">
    <location>
        <begin position="1"/>
        <end position="71"/>
    </location>
</feature>
<feature type="topological domain" description="Mitochondrial matrix" evidence="1">
    <location>
        <begin position="1"/>
        <end position="8"/>
    </location>
</feature>
<feature type="transmembrane region" description="Helical; Signal-anchor for type II membrane protein" evidence="3">
    <location>
        <begin position="9"/>
        <end position="25"/>
    </location>
</feature>
<feature type="topological domain" description="Mitochondrial intermembrane" evidence="1">
    <location>
        <begin position="26"/>
        <end position="71"/>
    </location>
</feature>
<feature type="region of interest" description="Disordered" evidence="4">
    <location>
        <begin position="52"/>
        <end position="71"/>
    </location>
</feature>
<gene>
    <name evidence="1" type="primary">BRAWNIN</name>
    <name evidence="1" type="synonym">BR</name>
</gene>
<evidence type="ECO:0000250" key="1">
    <source>
        <dbReference type="UniProtKB" id="Q69YU5"/>
    </source>
</evidence>
<evidence type="ECO:0000250" key="2">
    <source>
        <dbReference type="UniProtKB" id="Q8BTC1"/>
    </source>
</evidence>
<evidence type="ECO:0000255" key="3"/>
<evidence type="ECO:0000256" key="4">
    <source>
        <dbReference type="SAM" id="MobiDB-lite"/>
    </source>
</evidence>
<evidence type="ECO:0000305" key="5"/>
<keyword id="KW-0472">Membrane</keyword>
<keyword id="KW-0496">Mitochondrion</keyword>
<keyword id="KW-0999">Mitochondrion inner membrane</keyword>
<keyword id="KW-1185">Reference proteome</keyword>
<keyword id="KW-0735">Signal-anchor</keyword>
<keyword id="KW-0812">Transmembrane</keyword>
<keyword id="KW-1133">Transmembrane helix</keyword>
<sequence>MPAGVPMSTYLKMLAASLLAMCAGAEVVHRYYRPDLTIPEIPPKRGELKTELLGLKERKHKPQISQQEELK</sequence>
<dbReference type="EMBL" id="CR857742">
    <property type="protein sequence ID" value="CAH90009.1"/>
    <property type="molecule type" value="mRNA"/>
</dbReference>
<dbReference type="RefSeq" id="NP_001181969.1">
    <property type="nucleotide sequence ID" value="NM_001195040.1"/>
</dbReference>
<dbReference type="RefSeq" id="XP_009246443.1">
    <property type="nucleotide sequence ID" value="XM_009248168.1"/>
</dbReference>
<dbReference type="SMR" id="Q5RDZ8"/>
<dbReference type="FunCoup" id="Q5RDZ8">
    <property type="interactions" value="573"/>
</dbReference>
<dbReference type="Ensembl" id="ENSPPYT00000005794.2">
    <property type="protein sequence ID" value="ENSPPYP00000005580.1"/>
    <property type="gene ID" value="ENSPPYG00000004889.2"/>
</dbReference>
<dbReference type="GeneID" id="100171825"/>
<dbReference type="KEGG" id="pon:100171825"/>
<dbReference type="CTD" id="728568"/>
<dbReference type="eggNOG" id="ENOG502S9EP">
    <property type="taxonomic scope" value="Eukaryota"/>
</dbReference>
<dbReference type="GeneTree" id="ENSGT00390000007685"/>
<dbReference type="HOGENOM" id="CLU_202878_0_0_1"/>
<dbReference type="InParanoid" id="Q5RDZ8"/>
<dbReference type="OMA" id="AVHRYYR"/>
<dbReference type="OrthoDB" id="6139781at2759"/>
<dbReference type="TreeFam" id="TF333420"/>
<dbReference type="Proteomes" id="UP000001595">
    <property type="component" value="Chromosome 12"/>
</dbReference>
<dbReference type="GO" id="GO:0005743">
    <property type="term" value="C:mitochondrial inner membrane"/>
    <property type="evidence" value="ECO:0000250"/>
    <property type="project" value="UniProtKB"/>
</dbReference>
<dbReference type="GO" id="GO:0033617">
    <property type="term" value="P:mitochondrial cytochrome c oxidase assembly"/>
    <property type="evidence" value="ECO:0000250"/>
    <property type="project" value="UniProtKB"/>
</dbReference>
<dbReference type="GO" id="GO:0034551">
    <property type="term" value="P:mitochondrial respiratory chain complex III assembly"/>
    <property type="evidence" value="ECO:0000250"/>
    <property type="project" value="UniProtKB"/>
</dbReference>
<dbReference type="InterPro" id="IPR027858">
    <property type="entry name" value="BRAWNIN"/>
</dbReference>
<dbReference type="PANTHER" id="PTHR28492">
    <property type="entry name" value="HYPOTHETICAL PROTEIN LOC691921"/>
    <property type="match status" value="1"/>
</dbReference>
<dbReference type="PANTHER" id="PTHR28492:SF1">
    <property type="entry name" value="UBIQUINOL-CYTOCHROME-C REDUCTASE COMPLEX ASSEMBLY FACTOR 6"/>
    <property type="match status" value="1"/>
</dbReference>
<dbReference type="Pfam" id="PF14990">
    <property type="entry name" value="DUF4516"/>
    <property type="match status" value="1"/>
</dbReference>
<organism>
    <name type="scientific">Pongo abelii</name>
    <name type="common">Sumatran orangutan</name>
    <name type="synonym">Pongo pygmaeus abelii</name>
    <dbReference type="NCBI Taxonomy" id="9601"/>
    <lineage>
        <taxon>Eukaryota</taxon>
        <taxon>Metazoa</taxon>
        <taxon>Chordata</taxon>
        <taxon>Craniata</taxon>
        <taxon>Vertebrata</taxon>
        <taxon>Euteleostomi</taxon>
        <taxon>Mammalia</taxon>
        <taxon>Eutheria</taxon>
        <taxon>Euarchontoglires</taxon>
        <taxon>Primates</taxon>
        <taxon>Haplorrhini</taxon>
        <taxon>Catarrhini</taxon>
        <taxon>Hominidae</taxon>
        <taxon>Pongo</taxon>
    </lineage>
</organism>
<comment type="function">
    <text evidence="1 2">Required for the assembly and stability of the mitochondrial ubiquinol-cytochrome c reductase complex (complex III (CIII) or cytochrome b-c1 complex), a multisubunit transmembrane complex that is part of the mitochondrial electron transport chain (ETC) which drives oxidative phosphorylation. Mediates early complex III biogenesis. Participates in regulating the levels of electron transport chain proteins, and therefore energy supply, in response to changes in energy demand (By similarity). Also required for cytochrome c oxidase complex (complex IV) assembly (By similarity).</text>
</comment>
<comment type="subunit">
    <text evidence="1 2">Interacts with UQCRC1. Interacts with UQCRQ (By similarity). Interacts with UQCC5 (By similarity). Forms a complex, named COMB/coordinator of mitochondrial CYTB biogenesis, composed of UQCC1, UQCC2, UQCC4, UQCC5 and UQCC6; stabilizes nascent cytochrome b/MT-CYB and promotes its membrane insertion. Forms a complex, named COMA, composed of UQCC1, UQCC2 and UQCC4; activates MT-CYB translation. Forms a complex, named COMC, composed of UQCC1, UQCC2; UQCC3 and UQCC4; mediates MT-CYB hemylation and association with the first nuclear-encoded complex III subunit UQCRQ. Interacts with MT-CYB (By similarity).</text>
</comment>
<comment type="subcellular location">
    <subcellularLocation>
        <location evidence="1">Mitochondrion inner membrane</location>
        <topology evidence="1">Single-pass type II membrane protein</topology>
    </subcellularLocation>
</comment>
<comment type="similarity">
    <text evidence="5">Belongs to the UQCC6 family.</text>
</comment>
<accession>Q5RDZ8</accession>
<proteinExistence type="inferred from homology"/>
<reference key="1">
    <citation type="submission" date="2004-11" db="EMBL/GenBank/DDBJ databases">
        <authorList>
            <consortium name="The German cDNA consortium"/>
        </authorList>
    </citation>
    <scope>NUCLEOTIDE SEQUENCE [LARGE SCALE MRNA]</scope>
    <source>
        <tissue>Kidney</tissue>
    </source>
</reference>
<name>UQCC6_PONAB</name>
<protein>
    <recommendedName>
        <fullName>Ubiquinol-cytochrome c reductase complex assembly factor 6</fullName>
    </recommendedName>
    <alternativeName>
        <fullName evidence="1">Protein BRAWNIN</fullName>
    </alternativeName>
</protein>